<organism>
    <name type="scientific">Clostridium perfringens (strain ATCC 13124 / DSM 756 / JCM 1290 / NCIMB 6125 / NCTC 8237 / Type A)</name>
    <dbReference type="NCBI Taxonomy" id="195103"/>
    <lineage>
        <taxon>Bacteria</taxon>
        <taxon>Bacillati</taxon>
        <taxon>Bacillota</taxon>
        <taxon>Clostridia</taxon>
        <taxon>Eubacteriales</taxon>
        <taxon>Clostridiaceae</taxon>
        <taxon>Clostridium</taxon>
    </lineage>
</organism>
<reference key="1">
    <citation type="journal article" date="2006" name="Genome Res.">
        <title>Skewed genomic variability in strains of the toxigenic bacterial pathogen, Clostridium perfringens.</title>
        <authorList>
            <person name="Myers G.S.A."/>
            <person name="Rasko D.A."/>
            <person name="Cheung J.K."/>
            <person name="Ravel J."/>
            <person name="Seshadri R."/>
            <person name="DeBoy R.T."/>
            <person name="Ren Q."/>
            <person name="Varga J."/>
            <person name="Awad M.M."/>
            <person name="Brinkac L.M."/>
            <person name="Daugherty S.C."/>
            <person name="Haft D.H."/>
            <person name="Dodson R.J."/>
            <person name="Madupu R."/>
            <person name="Nelson W.C."/>
            <person name="Rosovitz M.J."/>
            <person name="Sullivan S.A."/>
            <person name="Khouri H."/>
            <person name="Dimitrov G.I."/>
            <person name="Watkins K.L."/>
            <person name="Mulligan S."/>
            <person name="Benton J."/>
            <person name="Radune D."/>
            <person name="Fisher D.J."/>
            <person name="Atkins H.S."/>
            <person name="Hiscox T."/>
            <person name="Jost B.H."/>
            <person name="Billington S.J."/>
            <person name="Songer J.G."/>
            <person name="McClane B.A."/>
            <person name="Titball R.W."/>
            <person name="Rood J.I."/>
            <person name="Melville S.B."/>
            <person name="Paulsen I.T."/>
        </authorList>
    </citation>
    <scope>NUCLEOTIDE SEQUENCE [LARGE SCALE GENOMIC DNA]</scope>
    <source>
        <strain>ATCC 13124 / DSM 756 / JCM 1290 / NCIMB 6125 / NCTC 8237 / S 107 / Type A</strain>
    </source>
</reference>
<feature type="chain" id="PRO_1000076561" description="tRNA-specific 2-thiouridylase MnmA">
    <location>
        <begin position="1"/>
        <end position="359"/>
    </location>
</feature>
<feature type="region of interest" description="Interaction with tRNA" evidence="1">
    <location>
        <begin position="150"/>
        <end position="152"/>
    </location>
</feature>
<feature type="region of interest" description="Interaction with tRNA" evidence="1">
    <location>
        <begin position="306"/>
        <end position="307"/>
    </location>
</feature>
<feature type="active site" description="Nucleophile" evidence="1">
    <location>
        <position position="104"/>
    </location>
</feature>
<feature type="active site" description="Cysteine persulfide intermediate" evidence="1">
    <location>
        <position position="200"/>
    </location>
</feature>
<feature type="binding site" evidence="1">
    <location>
        <begin position="9"/>
        <end position="16"/>
    </location>
    <ligand>
        <name>ATP</name>
        <dbReference type="ChEBI" id="CHEBI:30616"/>
    </ligand>
</feature>
<feature type="binding site" evidence="1">
    <location>
        <position position="35"/>
    </location>
    <ligand>
        <name>ATP</name>
        <dbReference type="ChEBI" id="CHEBI:30616"/>
    </ligand>
</feature>
<feature type="binding site" evidence="1">
    <location>
        <position position="128"/>
    </location>
    <ligand>
        <name>ATP</name>
        <dbReference type="ChEBI" id="CHEBI:30616"/>
    </ligand>
</feature>
<feature type="site" description="Interaction with tRNA" evidence="1">
    <location>
        <position position="129"/>
    </location>
</feature>
<feature type="site" description="Interaction with tRNA" evidence="1">
    <location>
        <position position="339"/>
    </location>
</feature>
<feature type="disulfide bond" description="Alternate" evidence="1">
    <location>
        <begin position="104"/>
        <end position="200"/>
    </location>
</feature>
<sequence>MTKKKVVIGMSGGVDSSVAAYLLKEQGYDVIGVTMQIWQEDKEYEEREGGCCSLSAVDDARRVAQKLDIPFYVLNFRDSFKRNVIDYFVDEYIQGRTPNPCIACNKYLKFDELLQKAKGIGADYVATGHYAKIEERDGRFQLIRSKDDRKDQTYALYNLTQEQLEHTLMPCGEFTKDKIREIAKEIGLDVHNKKDSEEICFIPDNNHGRYICEAAPNKVRPGNFVDKYGNVLGKHKGIVYYTIGQRKGLGLALGRPVFVTDINPVTNTVVVGPEEDIFKTDLVCKDINFISIDKLEGPMEVEAKIRYSARPAKATISPMENGRVKVSFEDKQRAITKGQSVVFYKDDLVVGGGIIESLL</sequence>
<protein>
    <recommendedName>
        <fullName evidence="1">tRNA-specific 2-thiouridylase MnmA</fullName>
        <ecNumber evidence="1">2.8.1.13</ecNumber>
    </recommendedName>
</protein>
<comment type="function">
    <text evidence="1">Catalyzes the 2-thiolation of uridine at the wobble position (U34) of tRNA, leading to the formation of s(2)U34.</text>
</comment>
<comment type="catalytic activity">
    <reaction evidence="1">
        <text>S-sulfanyl-L-cysteinyl-[protein] + uridine(34) in tRNA + AH2 + ATP = 2-thiouridine(34) in tRNA + L-cysteinyl-[protein] + A + AMP + diphosphate + H(+)</text>
        <dbReference type="Rhea" id="RHEA:47032"/>
        <dbReference type="Rhea" id="RHEA-COMP:10131"/>
        <dbReference type="Rhea" id="RHEA-COMP:11726"/>
        <dbReference type="Rhea" id="RHEA-COMP:11727"/>
        <dbReference type="Rhea" id="RHEA-COMP:11728"/>
        <dbReference type="ChEBI" id="CHEBI:13193"/>
        <dbReference type="ChEBI" id="CHEBI:15378"/>
        <dbReference type="ChEBI" id="CHEBI:17499"/>
        <dbReference type="ChEBI" id="CHEBI:29950"/>
        <dbReference type="ChEBI" id="CHEBI:30616"/>
        <dbReference type="ChEBI" id="CHEBI:33019"/>
        <dbReference type="ChEBI" id="CHEBI:61963"/>
        <dbReference type="ChEBI" id="CHEBI:65315"/>
        <dbReference type="ChEBI" id="CHEBI:87170"/>
        <dbReference type="ChEBI" id="CHEBI:456215"/>
        <dbReference type="EC" id="2.8.1.13"/>
    </reaction>
</comment>
<comment type="subcellular location">
    <subcellularLocation>
        <location evidence="1">Cytoplasm</location>
    </subcellularLocation>
</comment>
<comment type="similarity">
    <text evidence="1">Belongs to the MnmA/TRMU family.</text>
</comment>
<dbReference type="EC" id="2.8.1.13" evidence="1"/>
<dbReference type="EMBL" id="CP000246">
    <property type="protein sequence ID" value="ABG84972.1"/>
    <property type="molecule type" value="Genomic_DNA"/>
</dbReference>
<dbReference type="RefSeq" id="WP_003459581.1">
    <property type="nucleotide sequence ID" value="NC_008261.1"/>
</dbReference>
<dbReference type="SMR" id="Q0TPH2"/>
<dbReference type="STRING" id="195103.CPF_2037"/>
<dbReference type="PaxDb" id="195103-CPF_2037"/>
<dbReference type="KEGG" id="cpf:CPF_2037"/>
<dbReference type="eggNOG" id="COG0482">
    <property type="taxonomic scope" value="Bacteria"/>
</dbReference>
<dbReference type="HOGENOM" id="CLU_035188_0_0_9"/>
<dbReference type="Proteomes" id="UP000001823">
    <property type="component" value="Chromosome"/>
</dbReference>
<dbReference type="GO" id="GO:0005737">
    <property type="term" value="C:cytoplasm"/>
    <property type="evidence" value="ECO:0007669"/>
    <property type="project" value="UniProtKB-SubCell"/>
</dbReference>
<dbReference type="GO" id="GO:0005524">
    <property type="term" value="F:ATP binding"/>
    <property type="evidence" value="ECO:0007669"/>
    <property type="project" value="UniProtKB-KW"/>
</dbReference>
<dbReference type="GO" id="GO:0000049">
    <property type="term" value="F:tRNA binding"/>
    <property type="evidence" value="ECO:0007669"/>
    <property type="project" value="UniProtKB-KW"/>
</dbReference>
<dbReference type="GO" id="GO:0103016">
    <property type="term" value="F:tRNA-uridine 2-sulfurtransferase activity"/>
    <property type="evidence" value="ECO:0007669"/>
    <property type="project" value="UniProtKB-EC"/>
</dbReference>
<dbReference type="GO" id="GO:0002143">
    <property type="term" value="P:tRNA wobble position uridine thiolation"/>
    <property type="evidence" value="ECO:0007669"/>
    <property type="project" value="TreeGrafter"/>
</dbReference>
<dbReference type="CDD" id="cd01998">
    <property type="entry name" value="MnmA_TRMU-like"/>
    <property type="match status" value="1"/>
</dbReference>
<dbReference type="FunFam" id="2.30.30.280:FF:000001">
    <property type="entry name" value="tRNA-specific 2-thiouridylase MnmA"/>
    <property type="match status" value="1"/>
</dbReference>
<dbReference type="FunFam" id="2.40.30.10:FF:000023">
    <property type="entry name" value="tRNA-specific 2-thiouridylase MnmA"/>
    <property type="match status" value="1"/>
</dbReference>
<dbReference type="FunFam" id="3.40.50.620:FF:000115">
    <property type="entry name" value="tRNA-specific 2-thiouridylase MnmA"/>
    <property type="match status" value="1"/>
</dbReference>
<dbReference type="Gene3D" id="2.30.30.280">
    <property type="entry name" value="Adenine nucleotide alpha hydrolases-like domains"/>
    <property type="match status" value="1"/>
</dbReference>
<dbReference type="Gene3D" id="3.40.50.620">
    <property type="entry name" value="HUPs"/>
    <property type="match status" value="1"/>
</dbReference>
<dbReference type="Gene3D" id="2.40.30.10">
    <property type="entry name" value="Translation factors"/>
    <property type="match status" value="1"/>
</dbReference>
<dbReference type="HAMAP" id="MF_00144">
    <property type="entry name" value="tRNA_thiouridyl_MnmA"/>
    <property type="match status" value="1"/>
</dbReference>
<dbReference type="InterPro" id="IPR004506">
    <property type="entry name" value="MnmA-like"/>
</dbReference>
<dbReference type="InterPro" id="IPR046885">
    <property type="entry name" value="MnmA-like_C"/>
</dbReference>
<dbReference type="InterPro" id="IPR046884">
    <property type="entry name" value="MnmA-like_central"/>
</dbReference>
<dbReference type="InterPro" id="IPR023382">
    <property type="entry name" value="MnmA-like_central_sf"/>
</dbReference>
<dbReference type="InterPro" id="IPR014729">
    <property type="entry name" value="Rossmann-like_a/b/a_fold"/>
</dbReference>
<dbReference type="NCBIfam" id="NF001138">
    <property type="entry name" value="PRK00143.1"/>
    <property type="match status" value="1"/>
</dbReference>
<dbReference type="NCBIfam" id="TIGR00420">
    <property type="entry name" value="trmU"/>
    <property type="match status" value="1"/>
</dbReference>
<dbReference type="PANTHER" id="PTHR11933:SF5">
    <property type="entry name" value="MITOCHONDRIAL TRNA-SPECIFIC 2-THIOURIDYLASE 1"/>
    <property type="match status" value="1"/>
</dbReference>
<dbReference type="PANTHER" id="PTHR11933">
    <property type="entry name" value="TRNA 5-METHYLAMINOMETHYL-2-THIOURIDYLATE -METHYLTRANSFERASE"/>
    <property type="match status" value="1"/>
</dbReference>
<dbReference type="Pfam" id="PF03054">
    <property type="entry name" value="tRNA_Me_trans"/>
    <property type="match status" value="1"/>
</dbReference>
<dbReference type="Pfam" id="PF20258">
    <property type="entry name" value="tRNA_Me_trans_C"/>
    <property type="match status" value="1"/>
</dbReference>
<dbReference type="Pfam" id="PF20259">
    <property type="entry name" value="tRNA_Me_trans_M"/>
    <property type="match status" value="1"/>
</dbReference>
<dbReference type="SUPFAM" id="SSF52402">
    <property type="entry name" value="Adenine nucleotide alpha hydrolases-like"/>
    <property type="match status" value="1"/>
</dbReference>
<keyword id="KW-0067">ATP-binding</keyword>
<keyword id="KW-0963">Cytoplasm</keyword>
<keyword id="KW-1015">Disulfide bond</keyword>
<keyword id="KW-0547">Nucleotide-binding</keyword>
<keyword id="KW-0694">RNA-binding</keyword>
<keyword id="KW-0808">Transferase</keyword>
<keyword id="KW-0819">tRNA processing</keyword>
<keyword id="KW-0820">tRNA-binding</keyword>
<proteinExistence type="inferred from homology"/>
<evidence type="ECO:0000255" key="1">
    <source>
        <dbReference type="HAMAP-Rule" id="MF_00144"/>
    </source>
</evidence>
<gene>
    <name evidence="1" type="primary">mnmA</name>
    <name type="synonym">trmU</name>
    <name type="ordered locus">CPF_2037</name>
</gene>
<accession>Q0TPH2</accession>
<name>MNMA_CLOP1</name>